<dbReference type="EMBL" id="CU329670">
    <property type="protein sequence ID" value="CAA91238.1"/>
    <property type="molecule type" value="Genomic_DNA"/>
</dbReference>
<dbReference type="PIR" id="S62494">
    <property type="entry name" value="S62494"/>
</dbReference>
<dbReference type="RefSeq" id="NP_594541.1">
    <property type="nucleotide sequence ID" value="NM_001019970.2"/>
</dbReference>
<dbReference type="SMR" id="Q09844"/>
<dbReference type="BioGRID" id="277984">
    <property type="interactions" value="2"/>
</dbReference>
<dbReference type="STRING" id="284812.Q09844"/>
<dbReference type="iPTMnet" id="Q09844"/>
<dbReference type="PaxDb" id="4896-SPAC23D3.03c.1"/>
<dbReference type="EnsemblFungi" id="SPAC23D3.03c.1">
    <property type="protein sequence ID" value="SPAC23D3.03c.1:pep"/>
    <property type="gene ID" value="SPAC23D3.03c"/>
</dbReference>
<dbReference type="KEGG" id="spo:2541482"/>
<dbReference type="PomBase" id="SPAC23D3.03c"/>
<dbReference type="VEuPathDB" id="FungiDB:SPAC23D3.03c"/>
<dbReference type="eggNOG" id="KOG2223">
    <property type="taxonomic scope" value="Eukaryota"/>
</dbReference>
<dbReference type="HOGENOM" id="CLU_575102_0_0_1"/>
<dbReference type="InParanoid" id="Q09844"/>
<dbReference type="OMA" id="FQEAGPY"/>
<dbReference type="PhylomeDB" id="Q09844"/>
<dbReference type="PRO" id="PR:Q09844"/>
<dbReference type="Proteomes" id="UP000002485">
    <property type="component" value="Chromosome I"/>
</dbReference>
<dbReference type="GO" id="GO:0005794">
    <property type="term" value="C:Golgi apparatus"/>
    <property type="evidence" value="ECO:0007005"/>
    <property type="project" value="PomBase"/>
</dbReference>
<dbReference type="GO" id="GO:0005096">
    <property type="term" value="F:GTPase activator activity"/>
    <property type="evidence" value="ECO:0000318"/>
    <property type="project" value="GO_Central"/>
</dbReference>
<dbReference type="GO" id="GO:0016192">
    <property type="term" value="P:vesicle-mediated transport"/>
    <property type="evidence" value="ECO:0000303"/>
    <property type="project" value="PomBase"/>
</dbReference>
<dbReference type="FunFam" id="1.10.8.270:FF:000063">
    <property type="entry name" value="TBC1 domain family member"/>
    <property type="match status" value="1"/>
</dbReference>
<dbReference type="FunFam" id="1.10.10.750:FF:000019">
    <property type="entry name" value="Unplaced genomic scaffold supercont1.13, whole genome shotgun sequence"/>
    <property type="match status" value="1"/>
</dbReference>
<dbReference type="Gene3D" id="1.10.8.270">
    <property type="entry name" value="putative rabgap domain of human tbc1 domain family member 14 like domains"/>
    <property type="match status" value="1"/>
</dbReference>
<dbReference type="Gene3D" id="1.10.10.750">
    <property type="entry name" value="Ypt/Rab-GAP domain of gyp1p, domain 1"/>
    <property type="match status" value="1"/>
</dbReference>
<dbReference type="Gene3D" id="1.10.472.80">
    <property type="entry name" value="Ypt/Rab-GAP domain of gyp1p, domain 3"/>
    <property type="match status" value="1"/>
</dbReference>
<dbReference type="InterPro" id="IPR000195">
    <property type="entry name" value="Rab-GAP-TBC_dom"/>
</dbReference>
<dbReference type="InterPro" id="IPR035969">
    <property type="entry name" value="Rab-GAP_TBC_sf"/>
</dbReference>
<dbReference type="InterPro" id="IPR050302">
    <property type="entry name" value="Rab_GAP_TBC_domain"/>
</dbReference>
<dbReference type="PANTHER" id="PTHR47219:SF9">
    <property type="entry name" value="GTPASE ACTIVATING PROTEIN AND CENTROSOME-ASSOCIATED, ISOFORM B"/>
    <property type="match status" value="1"/>
</dbReference>
<dbReference type="PANTHER" id="PTHR47219">
    <property type="entry name" value="RAB GTPASE-ACTIVATING PROTEIN 1-LIKE"/>
    <property type="match status" value="1"/>
</dbReference>
<dbReference type="Pfam" id="PF00566">
    <property type="entry name" value="RabGAP-TBC"/>
    <property type="match status" value="1"/>
</dbReference>
<dbReference type="SMART" id="SM00164">
    <property type="entry name" value="TBC"/>
    <property type="match status" value="1"/>
</dbReference>
<dbReference type="SUPFAM" id="SSF47923">
    <property type="entry name" value="Ypt/Rab-GAP domain of gyp1p"/>
    <property type="match status" value="2"/>
</dbReference>
<dbReference type="PROSITE" id="PS50086">
    <property type="entry name" value="TBC_RABGAP"/>
    <property type="match status" value="1"/>
</dbReference>
<sequence>MESLESVDASSGSVGSYMSKSVRKHWWSRKGYHPTGSSKNGSRLKISSDENFQDELVVLDDAFLCNVPLELPSTSNAQKTAAESFSKLSPQDQLLSLQLNNVQESVFQQSTFNLPDALLDPGPASKEKQAVLSIGRPSWLPPKSKEEEKKHMREFEQIKKSAMRYDRQKQKEKIKMVEQKNKRNLYLVNVWEREILRNWPDALKSSRYAGIWRQGIPSRVRGRVWEKAIGNNLKLDYQSFFNARANAQKREAAEKAEQMNNANQFREDVCALELDLQSTMPHYSLFHTEGPLRRDLIGLLRAYSYYRFDTSYIPGTSFIGALLLLNMNLTSAFNCLANLLDKPFLQAVYTQDTSSLKSFYQTFLDTLKKNEPELATHLLIKLELVPDDFVYPLLRKLFIPMVSPEIASRILDCYVFEEDSFFIQLLMAVFKLLKPKLLVDDSRLVLSALLFENWDLGPEDEFMHFVYDISLS</sequence>
<evidence type="ECO:0000255" key="1">
    <source>
        <dbReference type="PROSITE-ProRule" id="PRU00163"/>
    </source>
</evidence>
<gene>
    <name type="ORF">SPAC23D3.03c</name>
</gene>
<protein>
    <recommendedName>
        <fullName>TBC domain-containing protein C23D3.03c</fullName>
    </recommendedName>
</protein>
<organism>
    <name type="scientific">Schizosaccharomyces pombe (strain 972 / ATCC 24843)</name>
    <name type="common">Fission yeast</name>
    <dbReference type="NCBI Taxonomy" id="284812"/>
    <lineage>
        <taxon>Eukaryota</taxon>
        <taxon>Fungi</taxon>
        <taxon>Dikarya</taxon>
        <taxon>Ascomycota</taxon>
        <taxon>Taphrinomycotina</taxon>
        <taxon>Schizosaccharomycetes</taxon>
        <taxon>Schizosaccharomycetales</taxon>
        <taxon>Schizosaccharomycetaceae</taxon>
        <taxon>Schizosaccharomyces</taxon>
    </lineage>
</organism>
<name>YAE3_SCHPO</name>
<feature type="chain" id="PRO_0000208060" description="TBC domain-containing protein C23D3.03c">
    <location>
        <begin position="1"/>
        <end position="472"/>
    </location>
</feature>
<feature type="domain" description="Rab-GAP TBC" evidence="1">
    <location>
        <begin position="215"/>
        <end position="418"/>
    </location>
</feature>
<keyword id="KW-1185">Reference proteome</keyword>
<reference key="1">
    <citation type="journal article" date="2002" name="Nature">
        <title>The genome sequence of Schizosaccharomyces pombe.</title>
        <authorList>
            <person name="Wood V."/>
            <person name="Gwilliam R."/>
            <person name="Rajandream M.A."/>
            <person name="Lyne M.H."/>
            <person name="Lyne R."/>
            <person name="Stewart A."/>
            <person name="Sgouros J.G."/>
            <person name="Peat N."/>
            <person name="Hayles J."/>
            <person name="Baker S.G."/>
            <person name="Basham D."/>
            <person name="Bowman S."/>
            <person name="Brooks K."/>
            <person name="Brown D."/>
            <person name="Brown S."/>
            <person name="Chillingworth T."/>
            <person name="Churcher C.M."/>
            <person name="Collins M."/>
            <person name="Connor R."/>
            <person name="Cronin A."/>
            <person name="Davis P."/>
            <person name="Feltwell T."/>
            <person name="Fraser A."/>
            <person name="Gentles S."/>
            <person name="Goble A."/>
            <person name="Hamlin N."/>
            <person name="Harris D.E."/>
            <person name="Hidalgo J."/>
            <person name="Hodgson G."/>
            <person name="Holroyd S."/>
            <person name="Hornsby T."/>
            <person name="Howarth S."/>
            <person name="Huckle E.J."/>
            <person name="Hunt S."/>
            <person name="Jagels K."/>
            <person name="James K.D."/>
            <person name="Jones L."/>
            <person name="Jones M."/>
            <person name="Leather S."/>
            <person name="McDonald S."/>
            <person name="McLean J."/>
            <person name="Mooney P."/>
            <person name="Moule S."/>
            <person name="Mungall K.L."/>
            <person name="Murphy L.D."/>
            <person name="Niblett D."/>
            <person name="Odell C."/>
            <person name="Oliver K."/>
            <person name="O'Neil S."/>
            <person name="Pearson D."/>
            <person name="Quail M.A."/>
            <person name="Rabbinowitsch E."/>
            <person name="Rutherford K.M."/>
            <person name="Rutter S."/>
            <person name="Saunders D."/>
            <person name="Seeger K."/>
            <person name="Sharp S."/>
            <person name="Skelton J."/>
            <person name="Simmonds M.N."/>
            <person name="Squares R."/>
            <person name="Squares S."/>
            <person name="Stevens K."/>
            <person name="Taylor K."/>
            <person name="Taylor R.G."/>
            <person name="Tivey A."/>
            <person name="Walsh S.V."/>
            <person name="Warren T."/>
            <person name="Whitehead S."/>
            <person name="Woodward J.R."/>
            <person name="Volckaert G."/>
            <person name="Aert R."/>
            <person name="Robben J."/>
            <person name="Grymonprez B."/>
            <person name="Weltjens I."/>
            <person name="Vanstreels E."/>
            <person name="Rieger M."/>
            <person name="Schaefer M."/>
            <person name="Mueller-Auer S."/>
            <person name="Gabel C."/>
            <person name="Fuchs M."/>
            <person name="Duesterhoeft A."/>
            <person name="Fritzc C."/>
            <person name="Holzer E."/>
            <person name="Moestl D."/>
            <person name="Hilbert H."/>
            <person name="Borzym K."/>
            <person name="Langer I."/>
            <person name="Beck A."/>
            <person name="Lehrach H."/>
            <person name="Reinhardt R."/>
            <person name="Pohl T.M."/>
            <person name="Eger P."/>
            <person name="Zimmermann W."/>
            <person name="Wedler H."/>
            <person name="Wambutt R."/>
            <person name="Purnelle B."/>
            <person name="Goffeau A."/>
            <person name="Cadieu E."/>
            <person name="Dreano S."/>
            <person name="Gloux S."/>
            <person name="Lelaure V."/>
            <person name="Mottier S."/>
            <person name="Galibert F."/>
            <person name="Aves S.J."/>
            <person name="Xiang Z."/>
            <person name="Hunt C."/>
            <person name="Moore K."/>
            <person name="Hurst S.M."/>
            <person name="Lucas M."/>
            <person name="Rochet M."/>
            <person name="Gaillardin C."/>
            <person name="Tallada V.A."/>
            <person name="Garzon A."/>
            <person name="Thode G."/>
            <person name="Daga R.R."/>
            <person name="Cruzado L."/>
            <person name="Jimenez J."/>
            <person name="Sanchez M."/>
            <person name="del Rey F."/>
            <person name="Benito J."/>
            <person name="Dominguez A."/>
            <person name="Revuelta J.L."/>
            <person name="Moreno S."/>
            <person name="Armstrong J."/>
            <person name="Forsburg S.L."/>
            <person name="Cerutti L."/>
            <person name="Lowe T."/>
            <person name="McCombie W.R."/>
            <person name="Paulsen I."/>
            <person name="Potashkin J."/>
            <person name="Shpakovski G.V."/>
            <person name="Ussery D."/>
            <person name="Barrell B.G."/>
            <person name="Nurse P."/>
        </authorList>
    </citation>
    <scope>NUCLEOTIDE SEQUENCE [LARGE SCALE GENOMIC DNA]</scope>
    <source>
        <strain>972 / ATCC 24843</strain>
    </source>
</reference>
<proteinExistence type="predicted"/>
<accession>Q09844</accession>